<feature type="chain" id="PRO_0000325367" description="3-phosphoshikimate 1-carboxyvinyltransferase">
    <location>
        <begin position="1"/>
        <end position="451"/>
    </location>
</feature>
<feature type="active site" description="Proton acceptor" evidence="1">
    <location>
        <position position="329"/>
    </location>
</feature>
<feature type="binding site" evidence="1">
    <location>
        <position position="30"/>
    </location>
    <ligand>
        <name>3-phosphoshikimate</name>
        <dbReference type="ChEBI" id="CHEBI:145989"/>
    </ligand>
</feature>
<feature type="binding site" evidence="1">
    <location>
        <position position="30"/>
    </location>
    <ligand>
        <name>phosphoenolpyruvate</name>
        <dbReference type="ChEBI" id="CHEBI:58702"/>
    </ligand>
</feature>
<feature type="binding site" evidence="1">
    <location>
        <position position="31"/>
    </location>
    <ligand>
        <name>3-phosphoshikimate</name>
        <dbReference type="ChEBI" id="CHEBI:145989"/>
    </ligand>
</feature>
<feature type="binding site" evidence="1">
    <location>
        <position position="35"/>
    </location>
    <ligand>
        <name>3-phosphoshikimate</name>
        <dbReference type="ChEBI" id="CHEBI:145989"/>
    </ligand>
</feature>
<feature type="binding site" evidence="1">
    <location>
        <position position="103"/>
    </location>
    <ligand>
        <name>phosphoenolpyruvate</name>
        <dbReference type="ChEBI" id="CHEBI:58702"/>
    </ligand>
</feature>
<feature type="binding site" evidence="1">
    <location>
        <position position="131"/>
    </location>
    <ligand>
        <name>phosphoenolpyruvate</name>
        <dbReference type="ChEBI" id="CHEBI:58702"/>
    </ligand>
</feature>
<feature type="binding site" evidence="1">
    <location>
        <position position="176"/>
    </location>
    <ligand>
        <name>3-phosphoshikimate</name>
        <dbReference type="ChEBI" id="CHEBI:145989"/>
    </ligand>
</feature>
<feature type="binding site" evidence="1">
    <location>
        <position position="178"/>
    </location>
    <ligand>
        <name>3-phosphoshikimate</name>
        <dbReference type="ChEBI" id="CHEBI:145989"/>
    </ligand>
</feature>
<feature type="binding site" evidence="1">
    <location>
        <position position="178"/>
    </location>
    <ligand>
        <name>phosphoenolpyruvate</name>
        <dbReference type="ChEBI" id="CHEBI:58702"/>
    </ligand>
</feature>
<feature type="binding site" evidence="1">
    <location>
        <position position="329"/>
    </location>
    <ligand>
        <name>3-phosphoshikimate</name>
        <dbReference type="ChEBI" id="CHEBI:145989"/>
    </ligand>
</feature>
<feature type="binding site" evidence="1">
    <location>
        <position position="356"/>
    </location>
    <ligand>
        <name>3-phosphoshikimate</name>
        <dbReference type="ChEBI" id="CHEBI:145989"/>
    </ligand>
</feature>
<feature type="binding site" evidence="1">
    <location>
        <position position="360"/>
    </location>
    <ligand>
        <name>phosphoenolpyruvate</name>
        <dbReference type="ChEBI" id="CHEBI:58702"/>
    </ligand>
</feature>
<feature type="binding site" evidence="1">
    <location>
        <position position="404"/>
    </location>
    <ligand>
        <name>phosphoenolpyruvate</name>
        <dbReference type="ChEBI" id="CHEBI:58702"/>
    </ligand>
</feature>
<dbReference type="EC" id="2.5.1.19" evidence="1"/>
<dbReference type="EMBL" id="CP000774">
    <property type="protein sequence ID" value="ABS61774.1"/>
    <property type="molecule type" value="Genomic_DNA"/>
</dbReference>
<dbReference type="RefSeq" id="WP_011995065.1">
    <property type="nucleotide sequence ID" value="NC_009719.1"/>
</dbReference>
<dbReference type="SMR" id="A7HPE1"/>
<dbReference type="STRING" id="402881.Plav_0151"/>
<dbReference type="KEGG" id="pla:Plav_0151"/>
<dbReference type="eggNOG" id="COG0128">
    <property type="taxonomic scope" value="Bacteria"/>
</dbReference>
<dbReference type="HOGENOM" id="CLU_024321_0_1_5"/>
<dbReference type="OrthoDB" id="9809920at2"/>
<dbReference type="UniPathway" id="UPA00053">
    <property type="reaction ID" value="UER00089"/>
</dbReference>
<dbReference type="Proteomes" id="UP000006377">
    <property type="component" value="Chromosome"/>
</dbReference>
<dbReference type="GO" id="GO:0005737">
    <property type="term" value="C:cytoplasm"/>
    <property type="evidence" value="ECO:0007669"/>
    <property type="project" value="UniProtKB-SubCell"/>
</dbReference>
<dbReference type="GO" id="GO:0003866">
    <property type="term" value="F:3-phosphoshikimate 1-carboxyvinyltransferase activity"/>
    <property type="evidence" value="ECO:0007669"/>
    <property type="project" value="UniProtKB-UniRule"/>
</dbReference>
<dbReference type="GO" id="GO:0008652">
    <property type="term" value="P:amino acid biosynthetic process"/>
    <property type="evidence" value="ECO:0007669"/>
    <property type="project" value="UniProtKB-KW"/>
</dbReference>
<dbReference type="GO" id="GO:0009073">
    <property type="term" value="P:aromatic amino acid family biosynthetic process"/>
    <property type="evidence" value="ECO:0007669"/>
    <property type="project" value="UniProtKB-KW"/>
</dbReference>
<dbReference type="GO" id="GO:0009423">
    <property type="term" value="P:chorismate biosynthetic process"/>
    <property type="evidence" value="ECO:0007669"/>
    <property type="project" value="UniProtKB-UniRule"/>
</dbReference>
<dbReference type="CDD" id="cd01556">
    <property type="entry name" value="EPSP_synthase"/>
    <property type="match status" value="1"/>
</dbReference>
<dbReference type="FunFam" id="3.65.10.10:FF:000005">
    <property type="entry name" value="3-phosphoshikimate 1-carboxyvinyltransferase"/>
    <property type="match status" value="1"/>
</dbReference>
<dbReference type="FunFam" id="3.65.10.10:FF:000006">
    <property type="entry name" value="3-phosphoshikimate 1-carboxyvinyltransferase"/>
    <property type="match status" value="1"/>
</dbReference>
<dbReference type="Gene3D" id="3.65.10.10">
    <property type="entry name" value="Enolpyruvate transferase domain"/>
    <property type="match status" value="2"/>
</dbReference>
<dbReference type="HAMAP" id="MF_00210">
    <property type="entry name" value="EPSP_synth"/>
    <property type="match status" value="1"/>
</dbReference>
<dbReference type="InterPro" id="IPR001986">
    <property type="entry name" value="Enolpyruvate_Tfrase_dom"/>
</dbReference>
<dbReference type="InterPro" id="IPR036968">
    <property type="entry name" value="Enolpyruvate_Tfrase_sf"/>
</dbReference>
<dbReference type="InterPro" id="IPR006264">
    <property type="entry name" value="EPSP_synthase"/>
</dbReference>
<dbReference type="InterPro" id="IPR023193">
    <property type="entry name" value="EPSP_synthase_CS"/>
</dbReference>
<dbReference type="InterPro" id="IPR013792">
    <property type="entry name" value="RNA3'P_cycl/enolpyr_Trfase_a/b"/>
</dbReference>
<dbReference type="NCBIfam" id="TIGR01356">
    <property type="entry name" value="aroA"/>
    <property type="match status" value="1"/>
</dbReference>
<dbReference type="PANTHER" id="PTHR21090">
    <property type="entry name" value="AROM/DEHYDROQUINATE SYNTHASE"/>
    <property type="match status" value="1"/>
</dbReference>
<dbReference type="PANTHER" id="PTHR21090:SF5">
    <property type="entry name" value="PENTAFUNCTIONAL AROM POLYPEPTIDE"/>
    <property type="match status" value="1"/>
</dbReference>
<dbReference type="Pfam" id="PF00275">
    <property type="entry name" value="EPSP_synthase"/>
    <property type="match status" value="1"/>
</dbReference>
<dbReference type="PIRSF" id="PIRSF000505">
    <property type="entry name" value="EPSPS"/>
    <property type="match status" value="1"/>
</dbReference>
<dbReference type="SUPFAM" id="SSF55205">
    <property type="entry name" value="EPT/RTPC-like"/>
    <property type="match status" value="1"/>
</dbReference>
<dbReference type="PROSITE" id="PS00104">
    <property type="entry name" value="EPSP_SYNTHASE_1"/>
    <property type="match status" value="1"/>
</dbReference>
<dbReference type="PROSITE" id="PS00885">
    <property type="entry name" value="EPSP_SYNTHASE_2"/>
    <property type="match status" value="1"/>
</dbReference>
<proteinExistence type="inferred from homology"/>
<comment type="function">
    <text evidence="1">Catalyzes the transfer of the enolpyruvyl moiety of phosphoenolpyruvate (PEP) to the 5-hydroxyl of shikimate-3-phosphate (S3P) to produce enolpyruvyl shikimate-3-phosphate and inorganic phosphate.</text>
</comment>
<comment type="catalytic activity">
    <reaction evidence="1">
        <text>3-phosphoshikimate + phosphoenolpyruvate = 5-O-(1-carboxyvinyl)-3-phosphoshikimate + phosphate</text>
        <dbReference type="Rhea" id="RHEA:21256"/>
        <dbReference type="ChEBI" id="CHEBI:43474"/>
        <dbReference type="ChEBI" id="CHEBI:57701"/>
        <dbReference type="ChEBI" id="CHEBI:58702"/>
        <dbReference type="ChEBI" id="CHEBI:145989"/>
        <dbReference type="EC" id="2.5.1.19"/>
    </reaction>
    <physiologicalReaction direction="left-to-right" evidence="1">
        <dbReference type="Rhea" id="RHEA:21257"/>
    </physiologicalReaction>
</comment>
<comment type="pathway">
    <text evidence="1">Metabolic intermediate biosynthesis; chorismate biosynthesis; chorismate from D-erythrose 4-phosphate and phosphoenolpyruvate: step 6/7.</text>
</comment>
<comment type="subunit">
    <text evidence="1">Monomer.</text>
</comment>
<comment type="subcellular location">
    <subcellularLocation>
        <location evidence="1">Cytoplasm</location>
    </subcellularLocation>
</comment>
<comment type="similarity">
    <text evidence="1">Belongs to the EPSP synthase family.</text>
</comment>
<accession>A7HPE1</accession>
<gene>
    <name evidence="1" type="primary">aroA</name>
    <name type="ordered locus">Plav_0151</name>
</gene>
<name>AROA_PARL1</name>
<sequence length="451" mass="46820">MASPSNHSASSLTAEPSGALLGSITVPGDKSISHRALIFGALAVGETRIGGLLEGEDVLATAETMRRLGAEVERHADGTWSVHGVGVGGLKEPDQPLDFGNSGTGARLVMGLVAGHPITATFIGDASLSRRPMGRVIAPLTETGATFHAREGGRLPLTLTGAGRALPITYRLPVASAQVKSAVLLAGLNAPGVTTVIEETPTRDHTERMLRAFGAHIEVEDGPRGLIVIRLTGEPELKPCRISVPGDPSSAAFPVVAALLTPGSEITVTGITLNPHRAGLYTTLMEMGGDIEVMNQREEGGEPVADLRVRASRLKGIEVPPARAASMIDEYPVLAIAAAFAEGETRMLGIHELRVKESDRIAATASGLRANGVKVHESDDGMVVEGRSGEVGGGGHVATHIDHRIAMSFLVMGLAAQKPVTVDDAAMIATSFPNFTGLMRGLGASFVGRAQ</sequence>
<reference key="1">
    <citation type="journal article" date="2011" name="Stand. Genomic Sci.">
        <title>Complete genome sequence of Parvibaculum lavamentivorans type strain (DS-1(T)).</title>
        <authorList>
            <person name="Schleheck D."/>
            <person name="Weiss M."/>
            <person name="Pitluck S."/>
            <person name="Bruce D."/>
            <person name="Land M.L."/>
            <person name="Han S."/>
            <person name="Saunders E."/>
            <person name="Tapia R."/>
            <person name="Detter C."/>
            <person name="Brettin T."/>
            <person name="Han J."/>
            <person name="Woyke T."/>
            <person name="Goodwin L."/>
            <person name="Pennacchio L."/>
            <person name="Nolan M."/>
            <person name="Cook A.M."/>
            <person name="Kjelleberg S."/>
            <person name="Thomas T."/>
        </authorList>
    </citation>
    <scope>NUCLEOTIDE SEQUENCE [LARGE SCALE GENOMIC DNA]</scope>
    <source>
        <strain>DS-1 / DSM 13023 / NCIMB 13966</strain>
    </source>
</reference>
<organism>
    <name type="scientific">Parvibaculum lavamentivorans (strain DS-1 / DSM 13023 / NCIMB 13966)</name>
    <dbReference type="NCBI Taxonomy" id="402881"/>
    <lineage>
        <taxon>Bacteria</taxon>
        <taxon>Pseudomonadati</taxon>
        <taxon>Pseudomonadota</taxon>
        <taxon>Alphaproteobacteria</taxon>
        <taxon>Hyphomicrobiales</taxon>
        <taxon>Parvibaculaceae</taxon>
        <taxon>Parvibaculum</taxon>
    </lineage>
</organism>
<evidence type="ECO:0000255" key="1">
    <source>
        <dbReference type="HAMAP-Rule" id="MF_00210"/>
    </source>
</evidence>
<keyword id="KW-0028">Amino-acid biosynthesis</keyword>
<keyword id="KW-0057">Aromatic amino acid biosynthesis</keyword>
<keyword id="KW-0963">Cytoplasm</keyword>
<keyword id="KW-1185">Reference proteome</keyword>
<keyword id="KW-0808">Transferase</keyword>
<protein>
    <recommendedName>
        <fullName evidence="1">3-phosphoshikimate 1-carboxyvinyltransferase</fullName>
        <ecNumber evidence="1">2.5.1.19</ecNumber>
    </recommendedName>
    <alternativeName>
        <fullName evidence="1">5-enolpyruvylshikimate-3-phosphate synthase</fullName>
        <shortName evidence="1">EPSP synthase</shortName>
        <shortName evidence="1">EPSPS</shortName>
    </alternativeName>
</protein>